<evidence type="ECO:0000250" key="1">
    <source>
        <dbReference type="UniProtKB" id="O00591"/>
    </source>
</evidence>
<evidence type="ECO:0000250" key="2">
    <source>
        <dbReference type="UniProtKB" id="O09028"/>
    </source>
</evidence>
<evidence type="ECO:0000250" key="3">
    <source>
        <dbReference type="UniProtKB" id="P18507"/>
    </source>
</evidence>
<evidence type="ECO:0000250" key="4">
    <source>
        <dbReference type="UniProtKB" id="P28472"/>
    </source>
</evidence>
<evidence type="ECO:0000250" key="5">
    <source>
        <dbReference type="UniProtKB" id="P47870"/>
    </source>
</evidence>
<evidence type="ECO:0000255" key="6"/>
<evidence type="ECO:0000305" key="7"/>
<proteinExistence type="evidence at transcript level"/>
<keyword id="KW-1003">Cell membrane</keyword>
<keyword id="KW-0868">Chloride</keyword>
<keyword id="KW-0869">Chloride channel</keyword>
<keyword id="KW-1015">Disulfide bond</keyword>
<keyword id="KW-0325">Glycoprotein</keyword>
<keyword id="KW-0407">Ion channel</keyword>
<keyword id="KW-0406">Ion transport</keyword>
<keyword id="KW-0472">Membrane</keyword>
<keyword id="KW-1185">Reference proteome</keyword>
<keyword id="KW-0732">Signal</keyword>
<keyword id="KW-0812">Transmembrane</keyword>
<keyword id="KW-1133">Transmembrane helix</keyword>
<keyword id="KW-0813">Transport</keyword>
<sequence>MKRSLHLTFVCLSLFSARMCVQGNQFNIEVSRSNKLSLPGFENLTAGYNKFLRPNFGGEPVQIALTLDVASISSISESNMDYTATIYLRQRWTDQRLVFEGNKSFTLDARLVEFLWVPDTYIVESKKSFLHEVTVGNRLIRLFSNGTVLYALRITTTVACNMDLSKYPMDTQTCKLQLESWGYDGNDVEFSWLRGNDSVRGLENLRLAQYTIQQYFTSVTRSQQETGNYTRLVLQFELQRNVLYFILETYVPSTFLVVLSWVSFWISLDSVPARTCIGVTTVLSMTTLMIGSRTSLPNTNCFIKAIDVYLGICFSFVFGALLEYAVAHYSSLQQMAAKDRGKAKEVEEVNITNIINSSISSFKRKISFASIEISGDNVDYSDLTMKTSDKVKFVFRDKLGRIVDYFTIQNPSNVDRYSKLLFPLIFMLANVFYWAYYMYF</sequence>
<dbReference type="EMBL" id="BT020763">
    <property type="protein sequence ID" value="AAX08780.1"/>
    <property type="molecule type" value="mRNA"/>
</dbReference>
<dbReference type="RefSeq" id="NP_001015618.1">
    <property type="nucleotide sequence ID" value="NM_001015618.1"/>
</dbReference>
<dbReference type="SMR" id="Q5EA06"/>
<dbReference type="FunCoup" id="Q5EA06">
    <property type="interactions" value="46"/>
</dbReference>
<dbReference type="STRING" id="9913.ENSBTAP00000003604"/>
<dbReference type="GlyCosmos" id="Q5EA06">
    <property type="glycosylation" value="5 sites, No reported glycans"/>
</dbReference>
<dbReference type="GlyGen" id="Q5EA06">
    <property type="glycosylation" value="5 sites"/>
</dbReference>
<dbReference type="PaxDb" id="9913-ENSBTAP00000003604"/>
<dbReference type="Ensembl" id="ENSBTAT00000003604.7">
    <property type="protein sequence ID" value="ENSBTAP00000003604.5"/>
    <property type="gene ID" value="ENSBTAG00000002779.7"/>
</dbReference>
<dbReference type="GeneID" id="517459"/>
<dbReference type="KEGG" id="bta:517459"/>
<dbReference type="CTD" id="2568"/>
<dbReference type="VEuPathDB" id="HostDB:ENSBTAG00000002779"/>
<dbReference type="VGNC" id="VGNC:29201">
    <property type="gene designation" value="GABRP"/>
</dbReference>
<dbReference type="eggNOG" id="KOG3643">
    <property type="taxonomic scope" value="Eukaryota"/>
</dbReference>
<dbReference type="GeneTree" id="ENSGT00940000160813"/>
<dbReference type="HOGENOM" id="CLU_010920_0_1_1"/>
<dbReference type="InParanoid" id="Q5EA06"/>
<dbReference type="OMA" id="TTVTCNM"/>
<dbReference type="OrthoDB" id="8890589at2759"/>
<dbReference type="TreeFam" id="TF315453"/>
<dbReference type="Proteomes" id="UP000009136">
    <property type="component" value="Chromosome 20"/>
</dbReference>
<dbReference type="Bgee" id="ENSBTAG00000002779">
    <property type="expression patterns" value="Expressed in zone of skin and 41 other cell types or tissues"/>
</dbReference>
<dbReference type="GO" id="GO:0016324">
    <property type="term" value="C:apical plasma membrane"/>
    <property type="evidence" value="ECO:0007669"/>
    <property type="project" value="UniProtKB-SubCell"/>
</dbReference>
<dbReference type="GO" id="GO:0034707">
    <property type="term" value="C:chloride channel complex"/>
    <property type="evidence" value="ECO:0007669"/>
    <property type="project" value="UniProtKB-KW"/>
</dbReference>
<dbReference type="GO" id="GO:1902711">
    <property type="term" value="C:GABA-A receptor complex"/>
    <property type="evidence" value="ECO:0000318"/>
    <property type="project" value="GO_Central"/>
</dbReference>
<dbReference type="GO" id="GO:0005886">
    <property type="term" value="C:plasma membrane"/>
    <property type="evidence" value="ECO:0000250"/>
    <property type="project" value="UniProtKB"/>
</dbReference>
<dbReference type="GO" id="GO:0004890">
    <property type="term" value="F:GABA-A receptor activity"/>
    <property type="evidence" value="ECO:0000250"/>
    <property type="project" value="UniProtKB"/>
</dbReference>
<dbReference type="GO" id="GO:0022851">
    <property type="term" value="F:GABA-gated chloride ion channel activity"/>
    <property type="evidence" value="ECO:0000250"/>
    <property type="project" value="UniProtKB"/>
</dbReference>
<dbReference type="GO" id="GO:1902476">
    <property type="term" value="P:chloride transmembrane transport"/>
    <property type="evidence" value="ECO:0000318"/>
    <property type="project" value="GO_Central"/>
</dbReference>
<dbReference type="CDD" id="cd19004">
    <property type="entry name" value="LGIC_ECD_GABAAR_pi"/>
    <property type="match status" value="1"/>
</dbReference>
<dbReference type="CDD" id="cd19058">
    <property type="entry name" value="LGIC_TM_GABAAR_pi"/>
    <property type="match status" value="1"/>
</dbReference>
<dbReference type="FunFam" id="1.20.58.390:FF:000019">
    <property type="entry name" value="Gamma-aminobutyric acid (GABA) A receptor, pi"/>
    <property type="match status" value="1"/>
</dbReference>
<dbReference type="FunFam" id="2.70.170.10:FF:000011">
    <property type="entry name" value="Gamma-aminobutyric acid receptor subunit pi isoform X1"/>
    <property type="match status" value="1"/>
</dbReference>
<dbReference type="Gene3D" id="2.70.170.10">
    <property type="entry name" value="Neurotransmitter-gated ion-channel ligand-binding domain"/>
    <property type="match status" value="1"/>
</dbReference>
<dbReference type="Gene3D" id="1.20.58.390">
    <property type="entry name" value="Neurotransmitter-gated ion-channel transmembrane domain"/>
    <property type="match status" value="1"/>
</dbReference>
<dbReference type="InterPro" id="IPR006028">
    <property type="entry name" value="GABAA/Glycine_rcpt"/>
</dbReference>
<dbReference type="InterPro" id="IPR008100">
    <property type="entry name" value="GABAAp_rcpt"/>
</dbReference>
<dbReference type="InterPro" id="IPR047032">
    <property type="entry name" value="GABAAR_pi_TM"/>
</dbReference>
<dbReference type="InterPro" id="IPR006202">
    <property type="entry name" value="Neur_chan_lig-bd"/>
</dbReference>
<dbReference type="InterPro" id="IPR036734">
    <property type="entry name" value="Neur_chan_lig-bd_sf"/>
</dbReference>
<dbReference type="InterPro" id="IPR006201">
    <property type="entry name" value="Neur_channel"/>
</dbReference>
<dbReference type="InterPro" id="IPR036719">
    <property type="entry name" value="Neuro-gated_channel_TM_sf"/>
</dbReference>
<dbReference type="InterPro" id="IPR038050">
    <property type="entry name" value="Neuro_actylchol_rec"/>
</dbReference>
<dbReference type="InterPro" id="IPR006029">
    <property type="entry name" value="Neurotrans-gated_channel_TM"/>
</dbReference>
<dbReference type="InterPro" id="IPR018000">
    <property type="entry name" value="Neurotransmitter_ion_chnl_CS"/>
</dbReference>
<dbReference type="NCBIfam" id="TIGR00860">
    <property type="entry name" value="LIC"/>
    <property type="match status" value="1"/>
</dbReference>
<dbReference type="PANTHER" id="PTHR18945">
    <property type="entry name" value="NEUROTRANSMITTER GATED ION CHANNEL"/>
    <property type="match status" value="1"/>
</dbReference>
<dbReference type="Pfam" id="PF02931">
    <property type="entry name" value="Neur_chan_LBD"/>
    <property type="match status" value="1"/>
</dbReference>
<dbReference type="Pfam" id="PF02932">
    <property type="entry name" value="Neur_chan_memb"/>
    <property type="match status" value="1"/>
</dbReference>
<dbReference type="PRINTS" id="PR00253">
    <property type="entry name" value="GABAARECEPTR"/>
</dbReference>
<dbReference type="PRINTS" id="PR01724">
    <property type="entry name" value="GABAARPI"/>
</dbReference>
<dbReference type="PRINTS" id="PR00252">
    <property type="entry name" value="NRIONCHANNEL"/>
</dbReference>
<dbReference type="SUPFAM" id="SSF90112">
    <property type="entry name" value="Neurotransmitter-gated ion-channel transmembrane pore"/>
    <property type="match status" value="1"/>
</dbReference>
<dbReference type="SUPFAM" id="SSF63712">
    <property type="entry name" value="Nicotinic receptor ligand binding domain-like"/>
    <property type="match status" value="1"/>
</dbReference>
<dbReference type="PROSITE" id="PS00236">
    <property type="entry name" value="NEUROTR_ION_CHANNEL"/>
    <property type="match status" value="1"/>
</dbReference>
<feature type="signal peptide" evidence="6">
    <location>
        <begin position="1"/>
        <end position="23"/>
    </location>
</feature>
<feature type="chain" id="PRO_0000318941" description="Gamma-aminobutyric acid receptor subunit pi" evidence="6">
    <location>
        <begin position="24"/>
        <end position="440"/>
    </location>
</feature>
<feature type="topological domain" description="Extracellular" evidence="7">
    <location>
        <begin position="24"/>
        <end position="241"/>
    </location>
</feature>
<feature type="transmembrane region" description="Helical" evidence="6">
    <location>
        <begin position="242"/>
        <end position="262"/>
    </location>
</feature>
<feature type="topological domain" description="Cytoplasmic" evidence="7">
    <location>
        <begin position="263"/>
        <end position="270"/>
    </location>
</feature>
<feature type="transmembrane region" description="Helical" evidence="6">
    <location>
        <begin position="271"/>
        <end position="290"/>
    </location>
</feature>
<feature type="topological domain" description="Extracellular" evidence="7">
    <location>
        <begin position="291"/>
        <end position="301"/>
    </location>
</feature>
<feature type="transmembrane region" description="Helical" evidence="6">
    <location>
        <begin position="302"/>
        <end position="322"/>
    </location>
</feature>
<feature type="topological domain" description="Cytoplasmic" evidence="7">
    <location>
        <begin position="323"/>
        <end position="419"/>
    </location>
</feature>
<feature type="transmembrane region" description="Helical" evidence="6">
    <location>
        <begin position="420"/>
        <end position="440"/>
    </location>
</feature>
<feature type="glycosylation site" description="N-linked (GlcNAc...) asparagine" evidence="6">
    <location>
        <position position="43"/>
    </location>
</feature>
<feature type="glycosylation site" description="N-linked (GlcNAc...) asparagine" evidence="6">
    <location>
        <position position="102"/>
    </location>
</feature>
<feature type="glycosylation site" description="N-linked (GlcNAc...) asparagine" evidence="6">
    <location>
        <position position="145"/>
    </location>
</feature>
<feature type="glycosylation site" description="N-linked (GlcNAc...) asparagine" evidence="6">
    <location>
        <position position="196"/>
    </location>
</feature>
<feature type="glycosylation site" description="N-linked (GlcNAc...) asparagine" evidence="6">
    <location>
        <position position="228"/>
    </location>
</feature>
<feature type="disulfide bond" evidence="4">
    <location>
        <begin position="160"/>
        <end position="174"/>
    </location>
</feature>
<comment type="function">
    <text evidence="1 2 5">Pi subunit of the heteropentameric ligand-gated chloride channel gated by gamma-aminobutyric acid (GABA) (By similarity). GABA-gated chloride channels, also named GABA(A) receptors (GABAAR), consist of five subunits arranged around a central pore and contain GABA active binding site(s) located at the alpha and beta subunit interfaces (By similarity). When activated by GABA, GABAARs selectively allow the flow of chloride anions across the cell membrane down their electrochemical gradient. Pi-containing GABAARs are mostly located in peripheral tissues. In the uterus, pi subunits modulate uterus contraction by altering the sensitivity of GABAARs to pregnanolone (By similarity). In the lungs, pi-containing GABAARs contribute to pulmonary fluid transport via luminal secretion of chloride (By similarity).</text>
</comment>
<comment type="catalytic activity">
    <reaction evidence="1">
        <text>chloride(in) = chloride(out)</text>
        <dbReference type="Rhea" id="RHEA:29823"/>
        <dbReference type="ChEBI" id="CHEBI:17996"/>
    </reaction>
</comment>
<comment type="subunit">
    <text evidence="1">Heteropentamer, formed by a combination of alpha (GABRA1-6), beta (GABRB1-3), gamma (GABRG1-3), delta (GABRD), epsilon (GABRE), rho (GABRR1-3), pi (GABRP) and theta (GABRQ) chains, each subunit exhibiting distinct physiological and pharmacological properties.</text>
</comment>
<comment type="subcellular location">
    <subcellularLocation>
        <location>Cell membrane</location>
        <topology evidence="6">Multi-pass membrane protein</topology>
    </subcellularLocation>
    <subcellularLocation>
        <location evidence="2">Apical cell membrane</location>
        <topology evidence="6">Multi-pass membrane protein</topology>
    </subcellularLocation>
    <text evidence="2">Located on the apical plasma membrane of alveolar epithelial type II cells.</text>
</comment>
<comment type="domain">
    <text evidence="3">GABAARs subunits share a common topological structure: a peptide sequence made up of a long extracellular N-terminal, four transmembrane domains, intracellular or cytoplasmic domain located between the third and the fourth transmembrane domains.</text>
</comment>
<comment type="similarity">
    <text evidence="7">Belongs to the ligand-gated ion channel (TC 1.A.9) family. Gamma-aminobutyric acid receptor (TC 1.A.9.5) subfamily. GABRP sub-subfamily.</text>
</comment>
<protein>
    <recommendedName>
        <fullName>Gamma-aminobutyric acid receptor subunit pi</fullName>
    </recommendedName>
    <alternativeName>
        <fullName evidence="1">GABA(A) receptor subunit pi</fullName>
        <shortName>GABAAR subunit pi</shortName>
    </alternativeName>
</protein>
<name>GBRP_BOVIN</name>
<accession>Q5EA06</accession>
<organism>
    <name type="scientific">Bos taurus</name>
    <name type="common">Bovine</name>
    <dbReference type="NCBI Taxonomy" id="9913"/>
    <lineage>
        <taxon>Eukaryota</taxon>
        <taxon>Metazoa</taxon>
        <taxon>Chordata</taxon>
        <taxon>Craniata</taxon>
        <taxon>Vertebrata</taxon>
        <taxon>Euteleostomi</taxon>
        <taxon>Mammalia</taxon>
        <taxon>Eutheria</taxon>
        <taxon>Laurasiatheria</taxon>
        <taxon>Artiodactyla</taxon>
        <taxon>Ruminantia</taxon>
        <taxon>Pecora</taxon>
        <taxon>Bovidae</taxon>
        <taxon>Bovinae</taxon>
        <taxon>Bos</taxon>
    </lineage>
</organism>
<reference key="1">
    <citation type="journal article" date="2005" name="BMC Genomics">
        <title>Characterization of 954 bovine full-CDS cDNA sequences.</title>
        <authorList>
            <person name="Harhay G.P."/>
            <person name="Sonstegard T.S."/>
            <person name="Keele J.W."/>
            <person name="Heaton M.P."/>
            <person name="Clawson M.L."/>
            <person name="Snelling W.M."/>
            <person name="Wiedmann R.T."/>
            <person name="Van Tassell C.P."/>
            <person name="Smith T.P.L."/>
        </authorList>
    </citation>
    <scope>NUCLEOTIDE SEQUENCE [LARGE SCALE MRNA]</scope>
</reference>
<gene>
    <name type="primary">GABRP</name>
</gene>